<evidence type="ECO:0000255" key="1"/>
<evidence type="ECO:0000269" key="2">
    <source>
    </source>
</evidence>
<evidence type="ECO:0000269" key="3">
    <source>
    </source>
</evidence>
<evidence type="ECO:0000269" key="4">
    <source>
    </source>
</evidence>
<evidence type="ECO:0000305" key="5"/>
<evidence type="ECO:0007829" key="6">
    <source>
        <dbReference type="PDB" id="2WY3"/>
    </source>
</evidence>
<comment type="function">
    <text evidence="3 4">Plays a role in escape from host immune response. Blocks the interaction between the host KLRK1 receptor with the ligands ULBP1 and ULBP2. ULBPs activate multiple signaling pathways in primary NK cells, resulting in the production of cytokines and chemokines. The sequestration of diverse KLRK1 ligands in the endoplasmic reticulum and cis-Golgi apparatus of cells by UL16 inhibits the activation of NK cells.</text>
</comment>
<comment type="subunit">
    <text evidence="2">Interacts with host ULBP1, ULBP2 and MICB.</text>
</comment>
<comment type="subcellular location">
    <subcellularLocation>
        <location evidence="5">Host membrane</location>
        <topology evidence="5">Single-pass membrane protein</topology>
    </subcellularLocation>
</comment>
<comment type="similarity">
    <text evidence="5">Belongs to the HHV-5 UL16 protein family.</text>
</comment>
<accession>P16757</accession>
<accession>Q7M6R7</accession>
<reference key="1">
    <citation type="journal article" date="1990" name="Curr. Top. Microbiol. Immunol.">
        <title>Analysis of the protein-coding content of the sequence of human cytomegalovirus strain AD169.</title>
        <authorList>
            <person name="Chee M.S."/>
            <person name="Bankier A.T."/>
            <person name="Beck S."/>
            <person name="Bohni R."/>
            <person name="Brown C.M."/>
            <person name="Cerny R."/>
            <person name="Horsnell T."/>
            <person name="Hutchison C.A. III"/>
            <person name="Kouzarides T."/>
            <person name="Martignetti J.A."/>
            <person name="Preddie E."/>
            <person name="Satchwell S.C."/>
            <person name="Tomlinson P."/>
            <person name="Weston K.M."/>
            <person name="Barrell B.G."/>
        </authorList>
    </citation>
    <scope>NUCLEOTIDE SEQUENCE [LARGE SCALE GENOMIC DNA]</scope>
</reference>
<reference key="2">
    <citation type="journal article" date="2003" name="J. Gen. Virol.">
        <title>The human cytomegalovirus genome revisited: comparison with the chimpanzee cytomegalovirus genome.</title>
        <authorList>
            <person name="Davison A.J."/>
            <person name="Dolan A."/>
            <person name="Akter P."/>
            <person name="Addison C."/>
            <person name="Dargan D.J."/>
            <person name="Alcendor D.J."/>
            <person name="McGeoch D.J."/>
            <person name="Hayward G.S."/>
        </authorList>
    </citation>
    <scope>GENOME REANNOTATION</scope>
</reference>
<reference key="3">
    <citation type="journal article" date="2003" name="J. Gen. Virol.">
        <authorList>
            <person name="Davison A.J."/>
            <person name="Dolan A."/>
            <person name="Akter P."/>
            <person name="Addison C."/>
            <person name="Dargan D.J."/>
            <person name="Alcendor D.J."/>
            <person name="McGeoch D.J."/>
            <person name="Hayward G.S."/>
        </authorList>
    </citation>
    <scope>ERRATUM OF PUBMED:12533697</scope>
</reference>
<reference key="4">
    <citation type="journal article" date="2001" name="Immunity">
        <title>ULBPs, novel MHC class I-related molecules, bind to CMV glycoprotein UL16 and stimulate NK cytotoxicity through the NKG2D receptor.</title>
        <authorList>
            <person name="Cosman D."/>
            <person name="Mullberg J."/>
            <person name="Sutherland C.L."/>
            <person name="Chin W."/>
            <person name="Armitage R."/>
            <person name="Fanslow W."/>
            <person name="Kubin M."/>
            <person name="Chalupny N.J."/>
        </authorList>
    </citation>
    <scope>INTERACTION WITH HOST ULBP1; ULBP2 AND MICB</scope>
</reference>
<reference key="5">
    <citation type="journal article" date="2003" name="J. Immunol.">
        <title>Effects of human cytomegalovirus infection on ligands for the activating NKG2D receptor of NK cells: up-regulation of UL16-binding protein (ULBP)1 and ULBP2 is counteracted by the viral UL16 protein.</title>
        <authorList>
            <person name="Rolle A."/>
            <person name="Mousavi-Jazi M."/>
            <person name="Eriksson M."/>
            <person name="Odeberg J."/>
            <person name="Soderberg-Naucler C."/>
            <person name="Cosman D."/>
            <person name="Karre K."/>
            <person name="Cerboni C."/>
        </authorList>
    </citation>
    <scope>FUNCTION</scope>
</reference>
<reference key="6">
    <citation type="journal article" date="2003" name="J. Exp. Med.">
        <title>Human cytomegalovirus glycoprotein UL16 causes intracellular sequestration of NKG2D ligands, protecting against natural killer cell cytotoxicity.</title>
        <authorList>
            <person name="Dunn C."/>
            <person name="Chalupny N.J."/>
            <person name="Sutherland C.L."/>
            <person name="Dosch S."/>
            <person name="Sivakumar P.V."/>
            <person name="Johnson D.C."/>
            <person name="Cosman D."/>
        </authorList>
    </citation>
    <scope>FUNCTION</scope>
</reference>
<reference key="7">
    <citation type="journal article" date="2010" name="PLoS Pathog.">
        <title>Structure of the HCMV UL16-MICB complex elucidates select binding of a viral immunoevasin to diverse NKG2D ligands.</title>
        <authorList>
            <person name="Muller S."/>
            <person name="Zocher G."/>
            <person name="Steinle A."/>
            <person name="Stehle T."/>
        </authorList>
    </citation>
    <scope>X-RAY CRYSTALLOGRAPHY (1.8 ANGSTROMS) OF 27-184</scope>
</reference>
<proteinExistence type="evidence at protein level"/>
<protein>
    <recommendedName>
        <fullName>Protein UL16</fullName>
    </recommendedName>
</protein>
<sequence length="230" mass="26147">MERRRGTVPLGWVFFVLCLSASSSCAVDLGSKSSNSTCRLNVTELASIHPGETWTLHGMCISICYYENVTEDEIIGVAFTWQHNESVVDLWLYQNDTVIRNFSDITTNILQDGLKMRTVPVTKLYTSRMVTNLTVGRYDCLRCENGTTKIIERLYVRLGSLYPRPPGSGLAKHPSVSADEELSATLARDIVLVSAITLFFFLLALRIPQRLCQRLRIRLPHRYQRLRTED</sequence>
<feature type="signal peptide" evidence="1">
    <location>
        <begin position="1"/>
        <end position="26"/>
    </location>
</feature>
<feature type="chain" id="PRO_0000037451" description="Protein UL16">
    <location>
        <begin position="27"/>
        <end position="230"/>
    </location>
</feature>
<feature type="topological domain" description="Extracellular" evidence="1">
    <location>
        <begin position="27"/>
        <end position="184"/>
    </location>
</feature>
<feature type="transmembrane region" description="Helical" evidence="1">
    <location>
        <begin position="185"/>
        <end position="205"/>
    </location>
</feature>
<feature type="topological domain" description="Cytoplasmic" evidence="1">
    <location>
        <begin position="206"/>
        <end position="230"/>
    </location>
</feature>
<feature type="glycosylation site" description="N-linked (GlcNAc...) asparagine; by host" evidence="1">
    <location>
        <position position="35"/>
    </location>
</feature>
<feature type="glycosylation site" description="N-linked (GlcNAc...) asparagine; by host" evidence="1">
    <location>
        <position position="41"/>
    </location>
</feature>
<feature type="glycosylation site" description="N-linked (GlcNAc...) asparagine; by host" evidence="1">
    <location>
        <position position="68"/>
    </location>
</feature>
<feature type="glycosylation site" description="N-linked (GlcNAc...) asparagine; by host" evidence="1">
    <location>
        <position position="84"/>
    </location>
</feature>
<feature type="glycosylation site" description="N-linked (GlcNAc...) asparagine; by host" evidence="1">
    <location>
        <position position="95"/>
    </location>
</feature>
<feature type="glycosylation site" description="N-linked (GlcNAc...) asparagine; by host" evidence="1">
    <location>
        <position position="101"/>
    </location>
</feature>
<feature type="glycosylation site" description="N-linked (GlcNAc...) asparagine; by host" evidence="1">
    <location>
        <position position="132"/>
    </location>
</feature>
<feature type="glycosylation site" description="N-linked (GlcNAc...) asparagine; by host" evidence="1">
    <location>
        <position position="145"/>
    </location>
</feature>
<feature type="strand" evidence="6">
    <location>
        <begin position="28"/>
        <end position="31"/>
    </location>
</feature>
<feature type="turn" evidence="6">
    <location>
        <begin position="32"/>
        <end position="35"/>
    </location>
</feature>
<feature type="strand" evidence="6">
    <location>
        <begin position="36"/>
        <end position="39"/>
    </location>
</feature>
<feature type="helix" evidence="6">
    <location>
        <begin position="42"/>
        <end position="47"/>
    </location>
</feature>
<feature type="strand" evidence="6">
    <location>
        <begin position="51"/>
        <end position="58"/>
    </location>
</feature>
<feature type="strand" evidence="6">
    <location>
        <begin position="60"/>
        <end position="68"/>
    </location>
</feature>
<feature type="strand" evidence="6">
    <location>
        <begin position="74"/>
        <end position="81"/>
    </location>
</feature>
<feature type="strand" evidence="6">
    <location>
        <begin position="88"/>
        <end position="94"/>
    </location>
</feature>
<feature type="strand" evidence="6">
    <location>
        <begin position="97"/>
        <end position="100"/>
    </location>
</feature>
<feature type="strand" evidence="6">
    <location>
        <begin position="108"/>
        <end position="115"/>
    </location>
</feature>
<feature type="strand" evidence="6">
    <location>
        <begin position="117"/>
        <end position="128"/>
    </location>
</feature>
<feature type="turn" evidence="6">
    <location>
        <begin position="132"/>
        <end position="134"/>
    </location>
</feature>
<feature type="strand" evidence="6">
    <location>
        <begin position="136"/>
        <end position="144"/>
    </location>
</feature>
<feature type="strand" evidence="6">
    <location>
        <begin position="147"/>
        <end position="157"/>
    </location>
</feature>
<gene>
    <name type="primary">UL16</name>
</gene>
<organism>
    <name type="scientific">Human cytomegalovirus (strain AD169)</name>
    <name type="common">HHV-5</name>
    <name type="synonym">Human herpesvirus 5</name>
    <dbReference type="NCBI Taxonomy" id="10360"/>
    <lineage>
        <taxon>Viruses</taxon>
        <taxon>Duplodnaviria</taxon>
        <taxon>Heunggongvirae</taxon>
        <taxon>Peploviricota</taxon>
        <taxon>Herviviricetes</taxon>
        <taxon>Herpesvirales</taxon>
        <taxon>Orthoherpesviridae</taxon>
        <taxon>Betaherpesvirinae</taxon>
        <taxon>Cytomegalovirus</taxon>
        <taxon>Cytomegalovirus humanbeta5</taxon>
        <taxon>Human cytomegalovirus</taxon>
    </lineage>
</organism>
<dbReference type="EMBL" id="X17403">
    <property type="protein sequence ID" value="CAA35448.1"/>
    <property type="molecule type" value="Genomic_DNA"/>
</dbReference>
<dbReference type="EMBL" id="BK000394">
    <property type="protein sequence ID" value="DAA00119.1"/>
    <property type="molecule type" value="Genomic_DNA"/>
</dbReference>
<dbReference type="PIR" id="S09778">
    <property type="entry name" value="S09778"/>
</dbReference>
<dbReference type="PDB" id="2WY3">
    <property type="method" value="X-ray"/>
    <property type="resolution" value="1.80 A"/>
    <property type="chains" value="B/D=27-184"/>
</dbReference>
<dbReference type="PDBsum" id="2WY3"/>
<dbReference type="SMR" id="P16757"/>
<dbReference type="IntAct" id="P16757">
    <property type="interactions" value="3"/>
</dbReference>
<dbReference type="GlyCosmos" id="P16757">
    <property type="glycosylation" value="8 sites, No reported glycans"/>
</dbReference>
<dbReference type="EvolutionaryTrace" id="P16757"/>
<dbReference type="Proteomes" id="UP000008991">
    <property type="component" value="Segment"/>
</dbReference>
<dbReference type="Proteomes" id="UP000008992">
    <property type="component" value="Segment"/>
</dbReference>
<dbReference type="GO" id="GO:0033644">
    <property type="term" value="C:host cell membrane"/>
    <property type="evidence" value="ECO:0007669"/>
    <property type="project" value="UniProtKB-SubCell"/>
</dbReference>
<dbReference type="GO" id="GO:0016020">
    <property type="term" value="C:membrane"/>
    <property type="evidence" value="ECO:0007669"/>
    <property type="project" value="UniProtKB-KW"/>
</dbReference>
<dbReference type="GO" id="GO:0039671">
    <property type="term" value="P:symbiont-mediated perturbation of host natural killer cell mediated immune response"/>
    <property type="evidence" value="ECO:0007669"/>
    <property type="project" value="UniProtKB-KW"/>
</dbReference>
<dbReference type="Gene3D" id="2.60.40.1990">
    <property type="match status" value="1"/>
</dbReference>
<dbReference type="InterPro" id="IPR038671">
    <property type="entry name" value="HCMV_UL16_sf"/>
</dbReference>
<dbReference type="InterPro" id="IPR035123">
    <property type="entry name" value="UL16"/>
</dbReference>
<dbReference type="Pfam" id="PF17622">
    <property type="entry name" value="UL16"/>
    <property type="match status" value="1"/>
</dbReference>
<name>UL16P_HCMVA</name>
<organismHost>
    <name type="scientific">Homo sapiens</name>
    <name type="common">Human</name>
    <dbReference type="NCBI Taxonomy" id="9606"/>
</organismHost>
<keyword id="KW-0002">3D-structure</keyword>
<keyword id="KW-0325">Glycoprotein</keyword>
<keyword id="KW-1043">Host membrane</keyword>
<keyword id="KW-0945">Host-virus interaction</keyword>
<keyword id="KW-0472">Membrane</keyword>
<keyword id="KW-1131">Modulation of host NK-cell activity by virus</keyword>
<keyword id="KW-1185">Reference proteome</keyword>
<keyword id="KW-0732">Signal</keyword>
<keyword id="KW-0812">Transmembrane</keyword>
<keyword id="KW-1133">Transmembrane helix</keyword>
<keyword id="KW-0899">Viral immunoevasion</keyword>